<dbReference type="EMBL" id="AE017194">
    <property type="protein sequence ID" value="AAS41688.1"/>
    <property type="status" value="ALT_FRAME"/>
    <property type="molecule type" value="Genomic_DNA"/>
</dbReference>
<dbReference type="KEGG" id="bca:BCE_2776"/>
<dbReference type="HOGENOM" id="CLU_067028_0_0_9"/>
<dbReference type="Proteomes" id="UP000002527">
    <property type="component" value="Chromosome"/>
</dbReference>
<dbReference type="GO" id="GO:0005886">
    <property type="term" value="C:plasma membrane"/>
    <property type="evidence" value="ECO:0007669"/>
    <property type="project" value="UniProtKB-SubCell"/>
</dbReference>
<dbReference type="InterPro" id="IPR010343">
    <property type="entry name" value="ArAE_1"/>
</dbReference>
<dbReference type="PANTHER" id="PTHR30509:SF9">
    <property type="entry name" value="MULTIDRUG RESISTANCE PROTEIN MDTO"/>
    <property type="match status" value="1"/>
</dbReference>
<dbReference type="PANTHER" id="PTHR30509">
    <property type="entry name" value="P-HYDROXYBENZOIC ACID EFFLUX PUMP SUBUNIT-RELATED"/>
    <property type="match status" value="1"/>
</dbReference>
<dbReference type="Pfam" id="PF06081">
    <property type="entry name" value="ArAE_1"/>
    <property type="match status" value="1"/>
</dbReference>
<reference key="1">
    <citation type="journal article" date="2004" name="Nucleic Acids Res.">
        <title>The genome sequence of Bacillus cereus ATCC 10987 reveals metabolic adaptations and a large plasmid related to Bacillus anthracis pXO1.</title>
        <authorList>
            <person name="Rasko D.A."/>
            <person name="Ravel J."/>
            <person name="Oekstad O.A."/>
            <person name="Helgason E."/>
            <person name="Cer R.Z."/>
            <person name="Jiang L."/>
            <person name="Shores K.A."/>
            <person name="Fouts D.E."/>
            <person name="Tourasse N.J."/>
            <person name="Angiuoli S.V."/>
            <person name="Kolonay J.F."/>
            <person name="Nelson W.C."/>
            <person name="Kolstoe A.-B."/>
            <person name="Fraser C.M."/>
            <person name="Read T.D."/>
        </authorList>
    </citation>
    <scope>NUCLEOTIDE SEQUENCE [LARGE SCALE GENOMIC DNA]</scope>
    <source>
        <strain>ATCC 10987 / NRS 248</strain>
    </source>
</reference>
<accession>Q736X4</accession>
<organism>
    <name type="scientific">Bacillus cereus (strain ATCC 10987 / NRS 248)</name>
    <dbReference type="NCBI Taxonomy" id="222523"/>
    <lineage>
        <taxon>Bacteria</taxon>
        <taxon>Bacillati</taxon>
        <taxon>Bacillota</taxon>
        <taxon>Bacilli</taxon>
        <taxon>Bacillales</taxon>
        <taxon>Bacillaceae</taxon>
        <taxon>Bacillus</taxon>
        <taxon>Bacillus cereus group</taxon>
    </lineage>
</organism>
<keyword id="KW-1003">Cell membrane</keyword>
<keyword id="KW-0472">Membrane</keyword>
<keyword id="KW-0812">Transmembrane</keyword>
<keyword id="KW-1133">Transmembrane helix</keyword>
<protein>
    <recommendedName>
        <fullName>UPF0421 protein BCE_2776</fullName>
    </recommendedName>
</protein>
<name>Y2776_BACC1</name>
<gene>
    <name type="ordered locus">BCE_2776</name>
</gene>
<evidence type="ECO:0000255" key="1"/>
<evidence type="ECO:0000305" key="2"/>
<feature type="chain" id="PRO_0000283007" description="UPF0421 protein BCE_2776">
    <location>
        <begin position="1"/>
        <end position="355"/>
    </location>
</feature>
<feature type="transmembrane region" description="Helical" evidence="1">
    <location>
        <begin position="19"/>
        <end position="39"/>
    </location>
</feature>
<feature type="transmembrane region" description="Helical" evidence="1">
    <location>
        <begin position="74"/>
        <end position="94"/>
    </location>
</feature>
<feature type="transmembrane region" description="Helical" evidence="1">
    <location>
        <begin position="109"/>
        <end position="129"/>
    </location>
</feature>
<feature type="transmembrane region" description="Helical" evidence="1">
    <location>
        <begin position="131"/>
        <end position="151"/>
    </location>
</feature>
<sequence length="355" mass="40873">MNQVRKWNIIGGRVIKTGIAVFLTVLVCEFFNIPTIFAVITAIVTIEPTATDSIKKGLVRFPASTIGSAYAMTFTFFLGHQALSYALAAMFTIVTCQKLKLHAGTLVATLTAVAMIPITADHYFTAFLIRLATTSTGIIVSTLVNFFILPPHYVKTISGCTEELFVKTAHIMEEWLNALIEGKVITKETTHNLSKVNLLLHKAVQFVQYEQKDWKYHRHTKKEMRSFLLVQKQLHLLQQIIYHIDNLARTPIETCDWSQNEKEILRRTIHSIISILRNNCNKIDEEHFKLIDELDKQFWNYKNDLAHCKPNQYHHHFSSESIILFEVLSIHDMLEELKQIXEKYEGENQFNCSVH</sequence>
<comment type="subcellular location">
    <subcellularLocation>
        <location evidence="2">Cell membrane</location>
        <topology evidence="2">Multi-pass membrane protein</topology>
    </subcellularLocation>
</comment>
<comment type="similarity">
    <text evidence="2">Belongs to the UPF0421 family.</text>
</comment>
<comment type="sequence caution" evidence="2">
    <conflict type="frameshift">
        <sequence resource="EMBL-CDS" id="AAS41688"/>
    </conflict>
</comment>
<proteinExistence type="inferred from homology"/>